<protein>
    <recommendedName>
        <fullName>Homeobox-leucine zipper protein ROC9</fullName>
    </recommendedName>
    <alternativeName>
        <fullName>GLABRA 2-like homeobox protein 9</fullName>
    </alternativeName>
    <alternativeName>
        <fullName>HD-ZIP protein ROC9</fullName>
    </alternativeName>
    <alternativeName>
        <fullName>Homeodomain transcription factor ROC9</fullName>
    </alternativeName>
    <alternativeName>
        <fullName>Protein RICE OUTERMOST CELL-SPECIFIC 9</fullName>
    </alternativeName>
</protein>
<gene>
    <name type="primary">ROC9</name>
    <name type="synonym">GL2-9</name>
    <name type="ordered locus">Os01g0760800</name>
    <name type="ordered locus">LOC_Os01g55549</name>
    <name type="ORF">P0460E08.22</name>
    <name type="ORF">P0512C01.11</name>
</gene>
<proteinExistence type="evidence at transcript level"/>
<evidence type="ECO:0000250" key="1"/>
<evidence type="ECO:0000255" key="2"/>
<evidence type="ECO:0000255" key="3">
    <source>
        <dbReference type="PROSITE-ProRule" id="PRU00108"/>
    </source>
</evidence>
<evidence type="ECO:0000255" key="4">
    <source>
        <dbReference type="PROSITE-ProRule" id="PRU00197"/>
    </source>
</evidence>
<evidence type="ECO:0000256" key="5">
    <source>
        <dbReference type="SAM" id="MobiDB-lite"/>
    </source>
</evidence>
<evidence type="ECO:0000305" key="6"/>
<reference key="1">
    <citation type="journal article" date="2002" name="Nature">
        <title>The genome sequence and structure of rice chromosome 1.</title>
        <authorList>
            <person name="Sasaki T."/>
            <person name="Matsumoto T."/>
            <person name="Yamamoto K."/>
            <person name="Sakata K."/>
            <person name="Baba T."/>
            <person name="Katayose Y."/>
            <person name="Wu J."/>
            <person name="Niimura Y."/>
            <person name="Cheng Z."/>
            <person name="Nagamura Y."/>
            <person name="Antonio B.A."/>
            <person name="Kanamori H."/>
            <person name="Hosokawa S."/>
            <person name="Masukawa M."/>
            <person name="Arikawa K."/>
            <person name="Chiden Y."/>
            <person name="Hayashi M."/>
            <person name="Okamoto M."/>
            <person name="Ando T."/>
            <person name="Aoki H."/>
            <person name="Arita K."/>
            <person name="Hamada M."/>
            <person name="Harada C."/>
            <person name="Hijishita S."/>
            <person name="Honda M."/>
            <person name="Ichikawa Y."/>
            <person name="Idonuma A."/>
            <person name="Iijima M."/>
            <person name="Ikeda M."/>
            <person name="Ikeno M."/>
            <person name="Ito S."/>
            <person name="Ito T."/>
            <person name="Ito Y."/>
            <person name="Ito Y."/>
            <person name="Iwabuchi A."/>
            <person name="Kamiya K."/>
            <person name="Karasawa W."/>
            <person name="Katagiri S."/>
            <person name="Kikuta A."/>
            <person name="Kobayashi N."/>
            <person name="Kono I."/>
            <person name="Machita K."/>
            <person name="Maehara T."/>
            <person name="Mizuno H."/>
            <person name="Mizubayashi T."/>
            <person name="Mukai Y."/>
            <person name="Nagasaki H."/>
            <person name="Nakashima M."/>
            <person name="Nakama Y."/>
            <person name="Nakamichi Y."/>
            <person name="Nakamura M."/>
            <person name="Namiki N."/>
            <person name="Negishi M."/>
            <person name="Ohta I."/>
            <person name="Ono N."/>
            <person name="Saji S."/>
            <person name="Sakai K."/>
            <person name="Shibata M."/>
            <person name="Shimokawa T."/>
            <person name="Shomura A."/>
            <person name="Song J."/>
            <person name="Takazaki Y."/>
            <person name="Terasawa K."/>
            <person name="Tsuji K."/>
            <person name="Waki K."/>
            <person name="Yamagata H."/>
            <person name="Yamane H."/>
            <person name="Yoshiki S."/>
            <person name="Yoshihara R."/>
            <person name="Yukawa K."/>
            <person name="Zhong H."/>
            <person name="Iwama H."/>
            <person name="Endo T."/>
            <person name="Ito H."/>
            <person name="Hahn J.H."/>
            <person name="Kim H.-I."/>
            <person name="Eun M.-Y."/>
            <person name="Yano M."/>
            <person name="Jiang J."/>
            <person name="Gojobori T."/>
        </authorList>
    </citation>
    <scope>NUCLEOTIDE SEQUENCE [LARGE SCALE GENOMIC DNA]</scope>
    <source>
        <strain>cv. Nipponbare</strain>
    </source>
</reference>
<reference key="2">
    <citation type="journal article" date="2005" name="Nature">
        <title>The map-based sequence of the rice genome.</title>
        <authorList>
            <consortium name="International rice genome sequencing project (IRGSP)"/>
        </authorList>
    </citation>
    <scope>NUCLEOTIDE SEQUENCE [LARGE SCALE GENOMIC DNA]</scope>
    <source>
        <strain>cv. Nipponbare</strain>
    </source>
</reference>
<reference key="3">
    <citation type="journal article" date="2008" name="Nucleic Acids Res.">
        <title>The rice annotation project database (RAP-DB): 2008 update.</title>
        <authorList>
            <consortium name="The rice annotation project (RAP)"/>
        </authorList>
    </citation>
    <scope>GENOME REANNOTATION</scope>
    <source>
        <strain>cv. Nipponbare</strain>
    </source>
</reference>
<reference key="4">
    <citation type="journal article" date="2013" name="Rice">
        <title>Improvement of the Oryza sativa Nipponbare reference genome using next generation sequence and optical map data.</title>
        <authorList>
            <person name="Kawahara Y."/>
            <person name="de la Bastide M."/>
            <person name="Hamilton J.P."/>
            <person name="Kanamori H."/>
            <person name="McCombie W.R."/>
            <person name="Ouyang S."/>
            <person name="Schwartz D.C."/>
            <person name="Tanaka T."/>
            <person name="Wu J."/>
            <person name="Zhou S."/>
            <person name="Childs K.L."/>
            <person name="Davidson R.M."/>
            <person name="Lin H."/>
            <person name="Quesada-Ocampo L."/>
            <person name="Vaillancourt B."/>
            <person name="Sakai H."/>
            <person name="Lee S.S."/>
            <person name="Kim J."/>
            <person name="Numa H."/>
            <person name="Itoh T."/>
            <person name="Buell C.R."/>
            <person name="Matsumoto T."/>
        </authorList>
    </citation>
    <scope>GENOME REANNOTATION</scope>
    <source>
        <strain>cv. Nipponbare</strain>
    </source>
</reference>
<reference key="5">
    <citation type="submission" date="2003-01" db="EMBL/GenBank/DDBJ databases">
        <title>The roles of rice GL2-type homeobox genes in epidermis differentiation.</title>
        <authorList>
            <person name="Ito M."/>
            <person name="Sentoku N."/>
            <person name="Nishimura A."/>
            <person name="Hong S.-K."/>
            <person name="Sato Y."/>
            <person name="Matsuoka M."/>
        </authorList>
    </citation>
    <scope>NUCLEOTIDE SEQUENCE [MRNA] OF 96-232</scope>
</reference>
<organism>
    <name type="scientific">Oryza sativa subsp. japonica</name>
    <name type="common">Rice</name>
    <dbReference type="NCBI Taxonomy" id="39947"/>
    <lineage>
        <taxon>Eukaryota</taxon>
        <taxon>Viridiplantae</taxon>
        <taxon>Streptophyta</taxon>
        <taxon>Embryophyta</taxon>
        <taxon>Tracheophyta</taxon>
        <taxon>Spermatophyta</taxon>
        <taxon>Magnoliopsida</taxon>
        <taxon>Liliopsida</taxon>
        <taxon>Poales</taxon>
        <taxon>Poaceae</taxon>
        <taxon>BOP clade</taxon>
        <taxon>Oryzoideae</taxon>
        <taxon>Oryzeae</taxon>
        <taxon>Oryzinae</taxon>
        <taxon>Oryza</taxon>
        <taxon>Oryza sativa</taxon>
    </lineage>
</organism>
<accession>Q5JMF3</accession>
<accession>Q0JJ46</accession>
<accession>Q7Y0V4</accession>
<accession>Q94DS6</accession>
<feature type="chain" id="PRO_0000331747" description="Homeobox-leucine zipper protein ROC9">
    <location>
        <begin position="1"/>
        <end position="816"/>
    </location>
</feature>
<feature type="domain" description="START" evidence="4">
    <location>
        <begin position="302"/>
        <end position="541"/>
    </location>
</feature>
<feature type="DNA-binding region" description="Homeobox" evidence="3">
    <location>
        <begin position="95"/>
        <end position="154"/>
    </location>
</feature>
<feature type="region of interest" description="Disordered" evidence="5">
    <location>
        <begin position="26"/>
        <end position="104"/>
    </location>
</feature>
<feature type="region of interest" description="Disordered" evidence="5">
    <location>
        <begin position="265"/>
        <end position="296"/>
    </location>
</feature>
<feature type="coiled-coil region" evidence="2">
    <location>
        <begin position="149"/>
        <end position="182"/>
    </location>
</feature>
<feature type="compositionally biased region" description="Basic residues" evidence="5">
    <location>
        <begin position="92"/>
        <end position="101"/>
    </location>
</feature>
<feature type="sequence conflict" description="In Ref. 5; BAC77162." evidence="6" ref="5">
    <location>
        <begin position="152"/>
        <end position="154"/>
    </location>
</feature>
<dbReference type="EMBL" id="AP003256">
    <property type="protein sequence ID" value="BAB61212.1"/>
    <property type="status" value="ALT_SEQ"/>
    <property type="molecule type" value="Genomic_DNA"/>
</dbReference>
<dbReference type="EMBL" id="AP003274">
    <property type="protein sequence ID" value="BAD87344.1"/>
    <property type="molecule type" value="Genomic_DNA"/>
</dbReference>
<dbReference type="EMBL" id="AP008207">
    <property type="protein sequence ID" value="BAF06232.1"/>
    <property type="status" value="ALT_SEQ"/>
    <property type="molecule type" value="Genomic_DNA"/>
</dbReference>
<dbReference type="EMBL" id="AP014957">
    <property type="status" value="NOT_ANNOTATED_CDS"/>
    <property type="molecule type" value="Genomic_DNA"/>
</dbReference>
<dbReference type="EMBL" id="AB101652">
    <property type="protein sequence ID" value="BAC77162.1"/>
    <property type="molecule type" value="mRNA"/>
</dbReference>
<dbReference type="SMR" id="Q5JMF3"/>
<dbReference type="FunCoup" id="Q5JMF3">
    <property type="interactions" value="1007"/>
</dbReference>
<dbReference type="STRING" id="39947.Q5JMF3"/>
<dbReference type="PaxDb" id="39947-Q5JMF3"/>
<dbReference type="EnsemblPlants" id="Os01t0760800-01">
    <property type="protein sequence ID" value="Os01t0760800-01"/>
    <property type="gene ID" value="Os01g0760800"/>
</dbReference>
<dbReference type="Gramene" id="Os01t0760800-01">
    <property type="protein sequence ID" value="Os01t0760800-01"/>
    <property type="gene ID" value="Os01g0760800"/>
</dbReference>
<dbReference type="KEGG" id="dosa:Os01g0760800"/>
<dbReference type="eggNOG" id="ENOG502QUI1">
    <property type="taxonomic scope" value="Eukaryota"/>
</dbReference>
<dbReference type="HOGENOM" id="CLU_118408_0_0_1"/>
<dbReference type="InParanoid" id="Q5JMF3"/>
<dbReference type="Proteomes" id="UP000000763">
    <property type="component" value="Chromosome 1"/>
</dbReference>
<dbReference type="Proteomes" id="UP000059680">
    <property type="component" value="Chromosome 1"/>
</dbReference>
<dbReference type="GO" id="GO:0005634">
    <property type="term" value="C:nucleus"/>
    <property type="evidence" value="ECO:0007669"/>
    <property type="project" value="UniProtKB-SubCell"/>
</dbReference>
<dbReference type="GO" id="GO:0000981">
    <property type="term" value="F:DNA-binding transcription factor activity, RNA polymerase II-specific"/>
    <property type="evidence" value="ECO:0007669"/>
    <property type="project" value="InterPro"/>
</dbReference>
<dbReference type="GO" id="GO:0008289">
    <property type="term" value="F:lipid binding"/>
    <property type="evidence" value="ECO:0007669"/>
    <property type="project" value="InterPro"/>
</dbReference>
<dbReference type="GO" id="GO:0000976">
    <property type="term" value="F:transcription cis-regulatory region binding"/>
    <property type="evidence" value="ECO:0007669"/>
    <property type="project" value="EnsemblPlants"/>
</dbReference>
<dbReference type="GO" id="GO:0010062">
    <property type="term" value="P:negative regulation of trichoblast fate specification"/>
    <property type="evidence" value="ECO:0007669"/>
    <property type="project" value="EnsemblPlants"/>
</dbReference>
<dbReference type="CDD" id="cd00086">
    <property type="entry name" value="homeodomain"/>
    <property type="match status" value="1"/>
</dbReference>
<dbReference type="CDD" id="cd08875">
    <property type="entry name" value="START_ArGLABRA2_like"/>
    <property type="match status" value="1"/>
</dbReference>
<dbReference type="FunFam" id="1.10.10.60:FF:000229">
    <property type="entry name" value="Homeobox-leucine zipper protein HDG1"/>
    <property type="match status" value="1"/>
</dbReference>
<dbReference type="Gene3D" id="3.30.530.20">
    <property type="match status" value="1"/>
</dbReference>
<dbReference type="Gene3D" id="1.10.10.60">
    <property type="entry name" value="Homeodomain-like"/>
    <property type="match status" value="1"/>
</dbReference>
<dbReference type="InterPro" id="IPR042160">
    <property type="entry name" value="GLABRA2/ANL2/PDF2/ATML1-like"/>
</dbReference>
<dbReference type="InterPro" id="IPR001356">
    <property type="entry name" value="HD"/>
</dbReference>
<dbReference type="InterPro" id="IPR017970">
    <property type="entry name" value="Homeobox_CS"/>
</dbReference>
<dbReference type="InterPro" id="IPR009057">
    <property type="entry name" value="Homeodomain-like_sf"/>
</dbReference>
<dbReference type="InterPro" id="IPR023393">
    <property type="entry name" value="START-like_dom_sf"/>
</dbReference>
<dbReference type="InterPro" id="IPR002913">
    <property type="entry name" value="START_lipid-bd_dom"/>
</dbReference>
<dbReference type="PANTHER" id="PTHR45654:SF24">
    <property type="entry name" value="HOMEOBOX-LEUCINE ZIPPER PROTEIN GLABRA 2"/>
    <property type="match status" value="1"/>
</dbReference>
<dbReference type="PANTHER" id="PTHR45654">
    <property type="entry name" value="HOMEOBOX-LEUCINE ZIPPER PROTEIN MERISTEM L1"/>
    <property type="match status" value="1"/>
</dbReference>
<dbReference type="Pfam" id="PF00046">
    <property type="entry name" value="Homeodomain"/>
    <property type="match status" value="1"/>
</dbReference>
<dbReference type="Pfam" id="PF01852">
    <property type="entry name" value="START"/>
    <property type="match status" value="1"/>
</dbReference>
<dbReference type="SMART" id="SM00389">
    <property type="entry name" value="HOX"/>
    <property type="match status" value="1"/>
</dbReference>
<dbReference type="SMART" id="SM00234">
    <property type="entry name" value="START"/>
    <property type="match status" value="1"/>
</dbReference>
<dbReference type="SUPFAM" id="SSF55961">
    <property type="entry name" value="Bet v1-like"/>
    <property type="match status" value="1"/>
</dbReference>
<dbReference type="SUPFAM" id="SSF46689">
    <property type="entry name" value="Homeodomain-like"/>
    <property type="match status" value="1"/>
</dbReference>
<dbReference type="PROSITE" id="PS00027">
    <property type="entry name" value="HOMEOBOX_1"/>
    <property type="match status" value="1"/>
</dbReference>
<dbReference type="PROSITE" id="PS50071">
    <property type="entry name" value="HOMEOBOX_2"/>
    <property type="match status" value="1"/>
</dbReference>
<dbReference type="PROSITE" id="PS50848">
    <property type="entry name" value="START"/>
    <property type="match status" value="1"/>
</dbReference>
<keyword id="KW-0175">Coiled coil</keyword>
<keyword id="KW-0238">DNA-binding</keyword>
<keyword id="KW-0371">Homeobox</keyword>
<keyword id="KW-0539">Nucleus</keyword>
<keyword id="KW-1185">Reference proteome</keyword>
<keyword id="KW-0804">Transcription</keyword>
<keyword id="KW-0805">Transcription regulation</keyword>
<name>ROC9_ORYSJ</name>
<comment type="function">
    <text evidence="1">Probable transcription factor.</text>
</comment>
<comment type="subcellular location">
    <subcellularLocation>
        <location evidence="6">Nucleus</location>
    </subcellularLocation>
</comment>
<comment type="similarity">
    <text evidence="6">Belongs to the HD-ZIP homeobox family. Class IV subfamily.</text>
</comment>
<comment type="sequence caution" evidence="6">
    <conflict type="erroneous gene model prediction">
        <sequence resource="EMBL-CDS" id="BAB61212"/>
    </conflict>
</comment>
<comment type="sequence caution" evidence="6">
    <conflict type="erroneous gene model prediction">
        <sequence resource="EMBL-CDS" id="BAF06232"/>
    </conflict>
</comment>
<sequence>MGTNRPRPRTKDFFAAPALSLTLAGVFGRKNGPAASGGDGVEEGDEEVQAAGEAAVEISSENAGPGCRQSQSGGGSGEDGGHDDDDGEGSNKKRRRKNYHRHTAEQIRIMEALFKESPHPDERQRQQVSKQLGLSARQVKFWFQNRRTQIKAVQERHENSLLKSELEKLQDEHRAMRELAKKPSRCLNCGVVATSSDAAAAATAADTREQRLRLEKAKLKAEVCMPPPRSRARPFRCATLQDTDSGELAMLNLFQIERLRGTPGKSAADGIASPPCSASAGAMQTNSRSPPLHDHDGGFLRHDDDKPRILELATRALDELVGMCSSGEPVWVRGVETGRDILNYDEYVRLFRRDHGGSGDQMAGWTVEASRECGLVYLDTMHLVHTFMDVDKWKDLFPTMISKAATLEMISNREDDGRDGVLQLMYAELQTLTPMVPTRELYFARYCKKLAAERWAIVDVSFDESETGVHASSAVRCWKNPSGCLIEEQNNGRCKMTWVEHTRCRRCTVAPLYRAVTASGVAFGARRWVAALQLQCERMVFAVATNVPTRDSTGVSTLAGRRSVLKLAHRMTSSLCRTTGGSCDMAWRRAPKGGSGGGGDDDIWLTSRENAGDDPGEPQGLIACAAASTWLPVNPTALLDLLRDESRRPEWDVMLPGKSVQSRVNLAKGKDRTNCVTAYAARPEEEEERGGKWVLQDVCTNPCESTIAYAAIDAAALQPVIAGHDSSGVHLLPCGFISVMPDGLESKPAVITASRRGGEASGAGSLVTVAFQVPASPSAAAATLSPDSVEAVTVLVSSTLRNIRKALGCDSCEEEF</sequence>